<sequence length="531" mass="58921">MSGRGAGGFPLPPLSPGGGAVAAALGAPPPPAGPGMLPGPALRGPGPAGGVGGPGAAAFRPMGPAGPAAQYQRPGMSPGNRMPMAGLQVGPPAGSPFGAAAPLRPGMPPTMMDPFRKRLLVPQAQPPMPAQRRGLKRRKMADKVLPQRIRELVPESQAYMDLLAFERKLDQTIARKRMEIQEAIKKPLTQKRKLRIYISNTFSPSKAEGDSAGTAGTPGGTPAGDKVASWELRVEGKLLDDPSKQKRKFSSFFKSLVIELDKELYGPDNHLVEWHRMPTTQETDGFQVKRPGDLNVKCTLLLMLDHQPPQYKLDPRLARLLGVHTQTRAAIMQALWLYIKHNQLQDGHEREYINCNRYFRQIFSCGRLRFSEIPMKLAGLLQHPDPIVINHVISVDPNDQKKTACYDIDVEVDDPLKAQMSNFLASTTNQQEIASLDVKIHETIESINQLKTQRDFMLSFSTDPQDFIQEWLRSQRRDLKIITDVIGNPEEERRAAFYHQPWAQEAVGRHIFAKVQQRRQELEQVLGIRLT</sequence>
<feature type="chain" id="PRO_0000071985" description="SWI/SNF-related matrix-associated actin-dependent regulator of chromatin subfamily D member 2">
    <location>
        <begin position="1"/>
        <end position="531"/>
    </location>
</feature>
<feature type="domain" description="SWIB/MDM2" evidence="1">
    <location>
        <begin position="306"/>
        <end position="383"/>
    </location>
</feature>
<feature type="region of interest" description="Disordered" evidence="2">
    <location>
        <begin position="205"/>
        <end position="226"/>
    </location>
</feature>
<feature type="modified residue" description="Asymmetric dimethylarginine" evidence="17">
    <location>
        <position position="81"/>
    </location>
</feature>
<feature type="modified residue" description="Asymmetric dimethylarginine" evidence="17">
    <location>
        <position position="104"/>
    </location>
</feature>
<feature type="modified residue" description="Phosphoserine" evidence="16">
    <location>
        <position position="203"/>
    </location>
</feature>
<feature type="modified residue" description="Phosphothreonine" evidence="12 13 14 15 16 18">
    <location>
        <position position="217"/>
    </location>
</feature>
<feature type="cross-link" description="Glycyl lysine isopeptide (Lys-Gly) (interchain with G-Cter in SUMO2)" evidence="19">
    <location>
        <position position="226"/>
    </location>
</feature>
<feature type="splice variant" id="VSP_040530" description="In isoform 3." evidence="7">
    <original>MSGRGAGGFPLPPLSPGGGAVAAALGAPPPPAGPGMLPGPALRGPGPAGGVGGPGAAAFRPMGPAGPAAQY</original>
    <variation>MGRRVGVEVTPRWAPQKCQGARP</variation>
    <location>
        <begin position="1"/>
        <end position="71"/>
    </location>
</feature>
<feature type="splice variant" id="VSP_040531" description="In isoform 2." evidence="10">
    <location>
        <begin position="48"/>
        <end position="68"/>
    </location>
</feature>
<feature type="splice variant" id="VSP_040532" description="In isoform 2." evidence="10">
    <original>GLQVGPPAGSPFGAAAPLRPGMPPTMMDPFRKRLLVPQ</original>
    <variation>RLAGGTPCWLPIWCSSSASTWHPTHHDGSIPKTPACAP</variation>
    <location>
        <begin position="86"/>
        <end position="123"/>
    </location>
</feature>
<feature type="sequence conflict" description="In Ref. 1; AAC50696." evidence="11" ref="1">
    <original>L</original>
    <variation>V</variation>
    <location>
        <position position="11"/>
    </location>
</feature>
<feature type="sequence conflict" description="In Ref. 5; AAI42964." evidence="11" ref="5">
    <original>P</original>
    <variation>Q</variation>
    <location>
        <position position="28"/>
    </location>
</feature>
<feature type="sequence conflict" description="In Ref. 1; AAC50696." evidence="11" ref="1">
    <original>N</original>
    <variation>G</variation>
    <location>
        <position position="269"/>
    </location>
</feature>
<feature type="sequence conflict" description="In Ref. 1; AAC50696." evidence="11" ref="1">
    <original>HR</original>
    <variation>YW</variation>
    <location>
        <begin position="275"/>
        <end position="276"/>
    </location>
</feature>
<feature type="sequence conflict" description="In Ref. 5; AAI42964." evidence="11" ref="5">
    <original>M</original>
    <variation>T</variation>
    <location>
        <position position="332"/>
    </location>
</feature>
<feature type="sequence conflict" description="In Ref. 5; AAI42964." evidence="11" ref="5">
    <original>R</original>
    <variation>S</variation>
    <location>
        <position position="369"/>
    </location>
</feature>
<feature type="sequence conflict" description="In Ref. 5; AAI42964." evidence="11" ref="5">
    <original>E</original>
    <variation>K</variation>
    <location>
        <position position="372"/>
    </location>
</feature>
<feature type="sequence conflict" description="In Ref. 1; AAC50696." evidence="11" ref="1">
    <original>I</original>
    <variation>T</variation>
    <location>
        <position position="486"/>
    </location>
</feature>
<accession>Q92925</accession>
<accession>A5PLL5</accession>
<accession>A6NNQ7</accession>
<accession>B4DV56</accession>
<accession>B4E1R6</accession>
<accession>Q7L2I6</accession>
<accession>Q9UHZ1</accession>
<dbReference type="EMBL" id="U66618">
    <property type="protein sequence ID" value="AAC50696.1"/>
    <property type="status" value="ALT_INIT"/>
    <property type="molecule type" value="mRNA"/>
</dbReference>
<dbReference type="EMBL" id="AK300939">
    <property type="protein sequence ID" value="BAG62568.1"/>
    <property type="molecule type" value="mRNA"/>
</dbReference>
<dbReference type="EMBL" id="AK303951">
    <property type="protein sequence ID" value="BAG64878.1"/>
    <property type="molecule type" value="mRNA"/>
</dbReference>
<dbReference type="EMBL" id="AC015651">
    <property type="status" value="NOT_ANNOTATED_CDS"/>
    <property type="molecule type" value="Genomic_DNA"/>
</dbReference>
<dbReference type="EMBL" id="CH471109">
    <property type="protein sequence ID" value="EAW94267.1"/>
    <property type="molecule type" value="Genomic_DNA"/>
</dbReference>
<dbReference type="EMBL" id="BC018953">
    <property type="protein sequence ID" value="AAH18953.2"/>
    <property type="molecule type" value="mRNA"/>
</dbReference>
<dbReference type="EMBL" id="BC142963">
    <property type="protein sequence ID" value="AAI42964.1"/>
    <property type="molecule type" value="mRNA"/>
</dbReference>
<dbReference type="EMBL" id="AF113019">
    <property type="protein sequence ID" value="AAF20280.1"/>
    <property type="status" value="ALT_INIT"/>
    <property type="molecule type" value="mRNA"/>
</dbReference>
<dbReference type="CCDS" id="CCDS45756.1">
    <molecule id="Q92925-1"/>
</dbReference>
<dbReference type="CCDS" id="CCDS82188.1">
    <molecule id="Q92925-3"/>
</dbReference>
<dbReference type="RefSeq" id="NP_001091896.1">
    <molecule id="Q92925-1"/>
    <property type="nucleotide sequence ID" value="NM_001098426.2"/>
</dbReference>
<dbReference type="RefSeq" id="NP_001317369.1">
    <molecule id="Q92925-3"/>
    <property type="nucleotide sequence ID" value="NM_001330440.2"/>
</dbReference>
<dbReference type="SMR" id="Q92925"/>
<dbReference type="BioGRID" id="112487">
    <property type="interactions" value="199"/>
</dbReference>
<dbReference type="ComplexPortal" id="CPX-1164">
    <property type="entry name" value="SWI/SNF ATP-dependent chromatin remodeling complex, ACTL6A-ARID1A-SMARCA2 variant"/>
</dbReference>
<dbReference type="ComplexPortal" id="CPX-1194">
    <property type="entry name" value="Muscle cell-specific SWI/SNF ATP-dependent chromatin remodeling complex, ACTL6A-ARID1A-SMARCA2 variant"/>
</dbReference>
<dbReference type="ComplexPortal" id="CPX-1196">
    <property type="entry name" value="Polybromo-associated SWI/SNF ATP-dependent chromatin remodeling complex, ACTL6B variant"/>
</dbReference>
<dbReference type="ComplexPortal" id="CPX-1199">
    <property type="entry name" value="Polybromo-associated SWI/SNF ATP-dependent chromatin remodeling complex, ACTL6A variant"/>
</dbReference>
<dbReference type="ComplexPortal" id="CPX-1203">
    <property type="entry name" value="Brain-specific SWI/SNF ATP-dependent chromatin remodeling complex, ARID1A-SMARCA2 variant"/>
</dbReference>
<dbReference type="ComplexPortal" id="CPX-1204">
    <property type="entry name" value="SWI/SNF ATP-dependent chromatin remodeling complex, ACTL6A-ARID1A-SMARCA4 variant"/>
</dbReference>
<dbReference type="ComplexPortal" id="CPX-1205">
    <property type="entry name" value="SWI/SNF ATP-dependent chromatin remodeling complex, ACTL6A-ARID1B-SMARCA2 variant"/>
</dbReference>
<dbReference type="ComplexPortal" id="CPX-1206">
    <property type="entry name" value="SWI/SNF ATP-dependent chromatin remodeling complex, ACTL6A-ARID1B-SMARCA4 variant"/>
</dbReference>
<dbReference type="ComplexPortal" id="CPX-1207">
    <property type="entry name" value="SWI/SNF ATP-dependent chromatin remodeling complex, ACTL6B-ARID1A-SMARCA2 variant"/>
</dbReference>
<dbReference type="ComplexPortal" id="CPX-1209">
    <property type="entry name" value="SWI/SNF ATP-dependent chromatin remodeling complex, ACTL6B-ARID1A-SMARCA4 variant"/>
</dbReference>
<dbReference type="ComplexPortal" id="CPX-1210">
    <property type="entry name" value="SWI/SNF ATP-dependent chromatin remodeling complex, ACTL6B-ARID1B-SMARCA2 variant"/>
</dbReference>
<dbReference type="ComplexPortal" id="CPX-1211">
    <property type="entry name" value="SWI/SNF ATP-dependent chromatin remodeling complex, ACTL6B-ARID1B-SMARCA4 variant"/>
</dbReference>
<dbReference type="ComplexPortal" id="CPX-1219">
    <property type="entry name" value="Brain-specific SWI/SNF ATP-dependent chromatin remodeling complex, ARID1A-SMARCA4 variant"/>
</dbReference>
<dbReference type="ComplexPortal" id="CPX-1220">
    <property type="entry name" value="Brain-specific SWI/SNF ATP-dependent chromatin remodeling complex, ARID1B-SMARCA2 variant"/>
</dbReference>
<dbReference type="ComplexPortal" id="CPX-1221">
    <property type="entry name" value="Brain-specific SWI/SNF ATP-dependent chromatin remodeling complex, ARID1B-SMARCA4 variant"/>
</dbReference>
<dbReference type="ComplexPortal" id="CPX-1222">
    <property type="entry name" value="Muscle cell-specific SWI/SNF ATP-dependent chromatin remodeling complex, ACTL6A-ARID1A-SMARCA4 variant"/>
</dbReference>
<dbReference type="ComplexPortal" id="CPX-1223">
    <property type="entry name" value="Muscle cell-specific SWI/SNF ATP-dependent chromatin remodeling complex, ACTL6A-ARID1B-SMARCA2 variant"/>
</dbReference>
<dbReference type="ComplexPortal" id="CPX-1224">
    <property type="entry name" value="Muscle cell-specific SWI/SNF ATP-dependent chromatin remodeling complex, ACTL6A-ARID1B-SMARCA4 variant"/>
</dbReference>
<dbReference type="ComplexPortal" id="CPX-1225">
    <property type="entry name" value="Muscle cell-specific SWI/SNF ATP-dependent chromatin remodeling complex, ACTL6B-ARID1A-SMARCA2 variant"/>
</dbReference>
<dbReference type="ComplexPortal" id="CPX-1226">
    <property type="entry name" value="Muscle cell-specific SWI/SNF ATP-dependent chromatin remodeling complex, ACTL6B-ARID1A-SMARCA4 variant"/>
</dbReference>
<dbReference type="ComplexPortal" id="CPX-1227">
    <property type="entry name" value="Muscle cell-specific SWI/SNF ATP-dependent chromatin remodeling complex, ACTL6B-ARID1B-SMARCA2 variant"/>
</dbReference>
<dbReference type="ComplexPortal" id="CPX-1228">
    <property type="entry name" value="Muscle cell-specific SWI/SNF ATP-dependent chromatin remodeling complex, ACTL6B-ARID1B-SMARCA4 variant"/>
</dbReference>
<dbReference type="CORUM" id="Q92925"/>
<dbReference type="DIP" id="DIP-31182N"/>
<dbReference type="FunCoup" id="Q92925">
    <property type="interactions" value="1875"/>
</dbReference>
<dbReference type="IntAct" id="Q92925">
    <property type="interactions" value="109"/>
</dbReference>
<dbReference type="MINT" id="Q92925"/>
<dbReference type="STRING" id="9606.ENSP00000392617"/>
<dbReference type="ChEMBL" id="CHEMBL5465341"/>
<dbReference type="GlyCosmos" id="Q92925">
    <property type="glycosylation" value="1 site, 2 glycans"/>
</dbReference>
<dbReference type="GlyGen" id="Q92925">
    <property type="glycosylation" value="3 sites, 2 O-linked glycans (1 site)"/>
</dbReference>
<dbReference type="iPTMnet" id="Q92925"/>
<dbReference type="PhosphoSitePlus" id="Q92925"/>
<dbReference type="SwissPalm" id="Q92925"/>
<dbReference type="BioMuta" id="SMARCD2"/>
<dbReference type="DMDM" id="322510105"/>
<dbReference type="jPOST" id="Q92925"/>
<dbReference type="MassIVE" id="Q92925"/>
<dbReference type="PaxDb" id="9606-ENSP00000392617"/>
<dbReference type="PeptideAtlas" id="Q92925"/>
<dbReference type="ProteomicsDB" id="75606">
    <molecule id="Q92925-1"/>
</dbReference>
<dbReference type="ProteomicsDB" id="75607">
    <molecule id="Q92925-2"/>
</dbReference>
<dbReference type="ProteomicsDB" id="75608">
    <molecule id="Q92925-3"/>
</dbReference>
<dbReference type="Pumba" id="Q92925"/>
<dbReference type="Antibodypedia" id="9431">
    <property type="antibodies" value="144 antibodies from 29 providers"/>
</dbReference>
<dbReference type="DNASU" id="6603"/>
<dbReference type="Ensembl" id="ENST00000323347.14">
    <molecule id="Q92925-3"/>
    <property type="protein sequence ID" value="ENSP00000318451.10"/>
    <property type="gene ID" value="ENSG00000108604.18"/>
</dbReference>
<dbReference type="Ensembl" id="ENST00000448276.7">
    <molecule id="Q92925-1"/>
    <property type="protein sequence ID" value="ENSP00000392617.2"/>
    <property type="gene ID" value="ENSG00000108604.18"/>
</dbReference>
<dbReference type="GeneID" id="6603"/>
<dbReference type="KEGG" id="hsa:6603"/>
<dbReference type="MANE-Select" id="ENST00000448276.7">
    <property type="protein sequence ID" value="ENSP00000392617.2"/>
    <property type="RefSeq nucleotide sequence ID" value="NM_001098426.2"/>
    <property type="RefSeq protein sequence ID" value="NP_001091896.1"/>
</dbReference>
<dbReference type="UCSC" id="uc010deb.2">
    <molecule id="Q92925-1"/>
    <property type="organism name" value="human"/>
</dbReference>
<dbReference type="AGR" id="HGNC:11107"/>
<dbReference type="CTD" id="6603"/>
<dbReference type="DisGeNET" id="6603"/>
<dbReference type="GeneCards" id="SMARCD2"/>
<dbReference type="HGNC" id="HGNC:11107">
    <property type="gene designation" value="SMARCD2"/>
</dbReference>
<dbReference type="HPA" id="ENSG00000108604">
    <property type="expression patterns" value="Low tissue specificity"/>
</dbReference>
<dbReference type="MalaCards" id="SMARCD2"/>
<dbReference type="MIM" id="601736">
    <property type="type" value="gene"/>
</dbReference>
<dbReference type="MIM" id="617475">
    <property type="type" value="phenotype"/>
</dbReference>
<dbReference type="neXtProt" id="NX_Q92925"/>
<dbReference type="OpenTargets" id="ENSG00000108604"/>
<dbReference type="Orphanet" id="169142">
    <property type="disease" value="Recurrent infections due to specific granule deficiency"/>
</dbReference>
<dbReference type="PharmGKB" id="PA35957"/>
<dbReference type="VEuPathDB" id="HostDB:ENSG00000108604"/>
<dbReference type="eggNOG" id="KOG2570">
    <property type="taxonomic scope" value="Eukaryota"/>
</dbReference>
<dbReference type="GeneTree" id="ENSGT00940000158654"/>
<dbReference type="InParanoid" id="Q92925"/>
<dbReference type="OMA" id="MPTQRRG"/>
<dbReference type="OrthoDB" id="10263741at2759"/>
<dbReference type="PAN-GO" id="Q92925">
    <property type="GO annotations" value="4 GO annotations based on evolutionary models"/>
</dbReference>
<dbReference type="PhylomeDB" id="Q92925"/>
<dbReference type="TreeFam" id="TF106486"/>
<dbReference type="PathwayCommons" id="Q92925"/>
<dbReference type="Reactome" id="R-HSA-3214858">
    <property type="pathway name" value="RMTs methylate histone arginines"/>
</dbReference>
<dbReference type="Reactome" id="R-HSA-8939243">
    <property type="pathway name" value="RUNX1 interacts with co-factors whose precise effect on RUNX1 targets is not known"/>
</dbReference>
<dbReference type="Reactome" id="R-HSA-9824585">
    <property type="pathway name" value="Regulation of MITF-M-dependent genes involved in pigmentation"/>
</dbReference>
<dbReference type="Reactome" id="R-HSA-9845323">
    <property type="pathway name" value="Regulation of endogenous retroelements by Piwi-interacting RNAs (piRNAs)"/>
</dbReference>
<dbReference type="SignaLink" id="Q92925"/>
<dbReference type="SIGNOR" id="Q92925"/>
<dbReference type="BioGRID-ORCS" id="6603">
    <property type="hits" value="67 hits in 1171 CRISPR screens"/>
</dbReference>
<dbReference type="CD-CODE" id="91857CE7">
    <property type="entry name" value="Nucleolus"/>
</dbReference>
<dbReference type="ChiTaRS" id="SMARCD2">
    <property type="organism name" value="human"/>
</dbReference>
<dbReference type="GeneWiki" id="SMARCD2"/>
<dbReference type="GenomeRNAi" id="6603"/>
<dbReference type="Pharos" id="Q92925">
    <property type="development level" value="Tbio"/>
</dbReference>
<dbReference type="PRO" id="PR:Q92925"/>
<dbReference type="Proteomes" id="UP000005640">
    <property type="component" value="Chromosome 17"/>
</dbReference>
<dbReference type="RNAct" id="Q92925">
    <property type="molecule type" value="protein"/>
</dbReference>
<dbReference type="Bgee" id="ENSG00000108604">
    <property type="expression patterns" value="Expressed in skin of abdomen and 169 other cell types or tissues"/>
</dbReference>
<dbReference type="ExpressionAtlas" id="Q92925">
    <property type="expression patterns" value="baseline and differential"/>
</dbReference>
<dbReference type="GO" id="GO:0140092">
    <property type="term" value="C:bBAF complex"/>
    <property type="evidence" value="ECO:0000303"/>
    <property type="project" value="ComplexPortal"/>
</dbReference>
<dbReference type="GO" id="GO:0035060">
    <property type="term" value="C:brahma complex"/>
    <property type="evidence" value="ECO:0000303"/>
    <property type="project" value="ComplexPortal"/>
</dbReference>
<dbReference type="GO" id="GO:0000785">
    <property type="term" value="C:chromatin"/>
    <property type="evidence" value="ECO:0007005"/>
    <property type="project" value="UniProtKB"/>
</dbReference>
<dbReference type="GO" id="GO:0000776">
    <property type="term" value="C:kinetochore"/>
    <property type="evidence" value="ECO:0000303"/>
    <property type="project" value="ComplexPortal"/>
</dbReference>
<dbReference type="GO" id="GO:0016363">
    <property type="term" value="C:nuclear matrix"/>
    <property type="evidence" value="ECO:0000303"/>
    <property type="project" value="ComplexPortal"/>
</dbReference>
<dbReference type="GO" id="GO:0005654">
    <property type="term" value="C:nucleoplasm"/>
    <property type="evidence" value="ECO:0000314"/>
    <property type="project" value="HPA"/>
</dbReference>
<dbReference type="GO" id="GO:0005634">
    <property type="term" value="C:nucleus"/>
    <property type="evidence" value="ECO:0000318"/>
    <property type="project" value="GO_Central"/>
</dbReference>
<dbReference type="GO" id="GO:0032991">
    <property type="term" value="C:protein-containing complex"/>
    <property type="evidence" value="ECO:0007005"/>
    <property type="project" value="UniProtKB"/>
</dbReference>
<dbReference type="GO" id="GO:0016586">
    <property type="term" value="C:RSC-type complex"/>
    <property type="evidence" value="ECO:0000303"/>
    <property type="project" value="ComplexPortal"/>
</dbReference>
<dbReference type="GO" id="GO:0016514">
    <property type="term" value="C:SWI/SNF complex"/>
    <property type="evidence" value="ECO:0000314"/>
    <property type="project" value="UniProtKB"/>
</dbReference>
<dbReference type="GO" id="GO:0003713">
    <property type="term" value="F:transcription coactivator activity"/>
    <property type="evidence" value="ECO:0000303"/>
    <property type="project" value="UniProtKB"/>
</dbReference>
<dbReference type="GO" id="GO:0003712">
    <property type="term" value="F:transcription coregulator activity"/>
    <property type="evidence" value="ECO:0000318"/>
    <property type="project" value="GO_Central"/>
</dbReference>
<dbReference type="GO" id="GO:0006338">
    <property type="term" value="P:chromatin remodeling"/>
    <property type="evidence" value="ECO:0000314"/>
    <property type="project" value="BHF-UCL"/>
</dbReference>
<dbReference type="GO" id="GO:0006337">
    <property type="term" value="P:nucleosome disassembly"/>
    <property type="evidence" value="ECO:0000314"/>
    <property type="project" value="BHF-UCL"/>
</dbReference>
<dbReference type="GO" id="GO:0045597">
    <property type="term" value="P:positive regulation of cell differentiation"/>
    <property type="evidence" value="ECO:0000303"/>
    <property type="project" value="ComplexPortal"/>
</dbReference>
<dbReference type="GO" id="GO:2000781">
    <property type="term" value="P:positive regulation of double-strand break repair"/>
    <property type="evidence" value="ECO:0000303"/>
    <property type="project" value="ComplexPortal"/>
</dbReference>
<dbReference type="GO" id="GO:0045663">
    <property type="term" value="P:positive regulation of myoblast differentiation"/>
    <property type="evidence" value="ECO:0000303"/>
    <property type="project" value="ComplexPortal"/>
</dbReference>
<dbReference type="GO" id="GO:0045582">
    <property type="term" value="P:positive regulation of T cell differentiation"/>
    <property type="evidence" value="ECO:0000303"/>
    <property type="project" value="ComplexPortal"/>
</dbReference>
<dbReference type="GO" id="GO:0070316">
    <property type="term" value="P:regulation of G0 to G1 transition"/>
    <property type="evidence" value="ECO:0000303"/>
    <property type="project" value="ComplexPortal"/>
</dbReference>
<dbReference type="GO" id="GO:2000045">
    <property type="term" value="P:regulation of G1/S transition of mitotic cell cycle"/>
    <property type="evidence" value="ECO:0000303"/>
    <property type="project" value="ComplexPortal"/>
</dbReference>
<dbReference type="GO" id="GO:0030071">
    <property type="term" value="P:regulation of mitotic metaphase/anaphase transition"/>
    <property type="evidence" value="ECO:0000303"/>
    <property type="project" value="ComplexPortal"/>
</dbReference>
<dbReference type="GO" id="GO:2000819">
    <property type="term" value="P:regulation of nucleotide-excision repair"/>
    <property type="evidence" value="ECO:0000303"/>
    <property type="project" value="ComplexPortal"/>
</dbReference>
<dbReference type="GO" id="GO:0006357">
    <property type="term" value="P:regulation of transcription by RNA polymerase II"/>
    <property type="evidence" value="ECO:0000318"/>
    <property type="project" value="GO_Central"/>
</dbReference>
<dbReference type="CDD" id="cd17675">
    <property type="entry name" value="SWIB_BAF60B"/>
    <property type="match status" value="1"/>
</dbReference>
<dbReference type="FunFam" id="1.10.245.10:FF:000001">
    <property type="entry name" value="SWI/SNF-related matrix-associated regulator of chromatin subfamily D member 3 isoform 1"/>
    <property type="match status" value="1"/>
</dbReference>
<dbReference type="Gene3D" id="1.10.245.10">
    <property type="entry name" value="SWIB/MDM2 domain"/>
    <property type="match status" value="1"/>
</dbReference>
<dbReference type="InterPro" id="IPR030090">
    <property type="entry name" value="SMARCD2_SWIB_dom"/>
</dbReference>
<dbReference type="InterPro" id="IPR019835">
    <property type="entry name" value="SWIB_domain"/>
</dbReference>
<dbReference type="InterPro" id="IPR036885">
    <property type="entry name" value="SWIB_MDM2_dom_sf"/>
</dbReference>
<dbReference type="InterPro" id="IPR003121">
    <property type="entry name" value="SWIB_MDM2_domain"/>
</dbReference>
<dbReference type="PANTHER" id="PTHR13844">
    <property type="entry name" value="SWI/SNF-RELATED MATRIX-ASSOCIATED ACTIN-DEPENDENT REGULATOR OF CHROMATIN SUBFAMILY D"/>
    <property type="match status" value="1"/>
</dbReference>
<dbReference type="Pfam" id="PF02201">
    <property type="entry name" value="SWIB"/>
    <property type="match status" value="1"/>
</dbReference>
<dbReference type="SMART" id="SM00151">
    <property type="entry name" value="SWIB"/>
    <property type="match status" value="1"/>
</dbReference>
<dbReference type="SUPFAM" id="SSF47592">
    <property type="entry name" value="SWIB/MDM2 domain"/>
    <property type="match status" value="1"/>
</dbReference>
<dbReference type="PROSITE" id="PS51925">
    <property type="entry name" value="SWIB_MDM2"/>
    <property type="match status" value="1"/>
</dbReference>
<gene>
    <name type="primary">SMARCD2</name>
    <name type="synonym">BAF60B</name>
    <name type="ORF">PRO2451</name>
</gene>
<comment type="function">
    <text evidence="5 8 9">Involved in transcriptional activation and repression of select genes by chromatin remodeling (alteration of DNA-nucleosome topology). Component of SWI/SNF chromatin remodeling complexes that carry out key enzymatic activities, changing chromatin structure by altering DNA-histone contacts within a nucleosome in an ATP-dependent manner (PubMed:22952240, PubMed:26601204). Critical regulator of myeloid differentiation, controlling granulocytopoiesis and the expression of genes involved in neutrophil granule formation (PubMed:28369036).</text>
</comment>
<comment type="subunit">
    <text evidence="3 4 5 8 9">Component of the multiprotein chromatin-remodeling complexes SWI/SNF: SWI/SNF-A (BAF), SWI/SNF-B (PBAF) and related complexes. The canonical complex contains a catalytic subunit (either SMARCA4/BRG1/BAF190A or SMARCA2/BRM/BAF190B), and at least SMARCE1, ACTL6A/BAF53, SMARCC1/BAF155, SMARCC2/BAF170, and SMARCB1/SNF5/BAF47. Other subunits specific to each of the complexes may also be present permitting several possible combinations developmentally and tissue specific (PubMed:22952240). Component of the BAF complex, which includes at least actin (ACTB), ARID1A/BAF250A, ARID1B/BAF250B, SMARCA2/BRM, SMARCA4/BRG1, ACTL6A/BAF53, ACTL6B/BAF53B, SMARCE1/BAF57, SMARCC1/BAF155, SMARCC2/BAF170, SMARCB1/SNF5/INI1, and one or more SMARCD1/BAF60A, SMARCD2/BAF60B, or SMARCD3/BAF60C (PubMed:18765789). In muscle cells, the BAF complex also contains DPF3. Component of the SWI/SNF-B (PBAF) chromatin remodeling complex, at least composed of SMARCA4/BRG1, SMARCB1/BAF47/SNF5, ACTL6A/BAF53A or ACTL6B/BAF53B, SMARCE1/BAF57, SMARCD1/BAF60A, SMARCD2/BAF60B, perhaps SMARCD3/BAF60C, SMARCC1/BAF155, SMARCC2/BAF170, PBRM1/BAF180, ARID2/BAF200 and actin (ACTB) (PubMed:22952240, PubMed:26601204). Interacts with UNKL (PubMed:20148946). Interacts with CEBPE (PubMed:28369036).</text>
</comment>
<comment type="interaction">
    <interactant intactId="EBI-358441">
        <id>Q92925</id>
    </interactant>
    <interactant intactId="EBI-637887">
        <id>O14497</id>
        <label>ARID1A</label>
    </interactant>
    <organismsDiffer>false</organismsDiffer>
    <experiments>6</experiments>
</comment>
<comment type="interaction">
    <interactant intactId="EBI-358441">
        <id>Q92925</id>
    </interactant>
    <interactant intactId="EBI-7797561">
        <id>Q9H9P5</id>
        <label>UNKL</label>
    </interactant>
    <organismsDiffer>false</organismsDiffer>
    <experiments>2</experiments>
</comment>
<comment type="subcellular location">
    <subcellularLocation>
        <location evidence="11">Nucleus</location>
    </subcellularLocation>
</comment>
<comment type="alternative products">
    <event type="alternative splicing"/>
    <isoform>
        <id>Q92925-1</id>
        <name>1</name>
        <sequence type="displayed"/>
    </isoform>
    <isoform>
        <id>Q92925-2</id>
        <name>2</name>
        <sequence type="described" ref="VSP_040531 VSP_040532"/>
    </isoform>
    <isoform>
        <id>Q92925-3</id>
        <name>3</name>
        <sequence type="described" ref="VSP_040530"/>
    </isoform>
</comment>
<comment type="tissue specificity">
    <text evidence="6">Isoform 2 is expressed in the pancreas.</text>
</comment>
<comment type="PTM">
    <text evidence="4">Ubiquitinated through a signaling process involving RAC1 and the RING finger protein UNKL.</text>
</comment>
<comment type="disease" evidence="5">
    <disease id="DI-05000">
        <name>Specific granule deficiency 2</name>
        <acronym>SGD2</acronym>
        <description>A form of specific granule deficiency, an autosomal recessive disorder characterized by recurrent pyogenic infections, defective neutrophil chemotaxis and bactericidal activity, and lack of neutrophil secondary granule proteins. SGD2 is due to defective neutrophil development. Bone marrow findings include hypercellularity, abnormal megakaryocytes, and features of progressive myelofibrosis with blasts. Some patients may have additional findings, including delayed development, mild dysmorphic features, and distal skeletal anomalies.</description>
        <dbReference type="MIM" id="617475"/>
    </disease>
    <text>The disease is caused by variants affecting the gene represented in this entry.</text>
</comment>
<comment type="miscellaneous">
    <molecule>Isoform 2</molecule>
    <text evidence="11">Produced by aberrant splicing sites.</text>
</comment>
<comment type="similarity">
    <text evidence="11">Belongs to the SMARCD family.</text>
</comment>
<comment type="sequence caution" evidence="11">
    <conflict type="erroneous initiation">
        <sequence resource="EMBL-CDS" id="AAC50696"/>
    </conflict>
    <text>Truncated N-terminus.</text>
</comment>
<comment type="sequence caution" evidence="11">
    <conflict type="erroneous initiation">
        <sequence resource="EMBL-CDS" id="AAF20280"/>
    </conflict>
    <text>Truncated N-terminus.</text>
</comment>
<name>SMRD2_HUMAN</name>
<reference key="1">
    <citation type="journal article" date="1996" name="Genes Dev.">
        <title>Diversity and specialization of mammalian SWI/SNF complexes.</title>
        <authorList>
            <person name="Wang W."/>
            <person name="Xue Y."/>
            <person name="Zhou S."/>
            <person name="Kuo A."/>
            <person name="Cairns B.R."/>
            <person name="Crabtree G.R."/>
        </authorList>
    </citation>
    <scope>NUCLEOTIDE SEQUENCE [MRNA] (ISOFORM 2)</scope>
    <scope>TISSUE SPECIFICITY</scope>
</reference>
<reference key="2">
    <citation type="journal article" date="2004" name="Nat. Genet.">
        <title>Complete sequencing and characterization of 21,243 full-length human cDNAs.</title>
        <authorList>
            <person name="Ota T."/>
            <person name="Suzuki Y."/>
            <person name="Nishikawa T."/>
            <person name="Otsuki T."/>
            <person name="Sugiyama T."/>
            <person name="Irie R."/>
            <person name="Wakamatsu A."/>
            <person name="Hayashi K."/>
            <person name="Sato H."/>
            <person name="Nagai K."/>
            <person name="Kimura K."/>
            <person name="Makita H."/>
            <person name="Sekine M."/>
            <person name="Obayashi M."/>
            <person name="Nishi T."/>
            <person name="Shibahara T."/>
            <person name="Tanaka T."/>
            <person name="Ishii S."/>
            <person name="Yamamoto J."/>
            <person name="Saito K."/>
            <person name="Kawai Y."/>
            <person name="Isono Y."/>
            <person name="Nakamura Y."/>
            <person name="Nagahari K."/>
            <person name="Murakami K."/>
            <person name="Yasuda T."/>
            <person name="Iwayanagi T."/>
            <person name="Wagatsuma M."/>
            <person name="Shiratori A."/>
            <person name="Sudo H."/>
            <person name="Hosoiri T."/>
            <person name="Kaku Y."/>
            <person name="Kodaira H."/>
            <person name="Kondo H."/>
            <person name="Sugawara M."/>
            <person name="Takahashi M."/>
            <person name="Kanda K."/>
            <person name="Yokoi T."/>
            <person name="Furuya T."/>
            <person name="Kikkawa E."/>
            <person name="Omura Y."/>
            <person name="Abe K."/>
            <person name="Kamihara K."/>
            <person name="Katsuta N."/>
            <person name="Sato K."/>
            <person name="Tanikawa M."/>
            <person name="Yamazaki M."/>
            <person name="Ninomiya K."/>
            <person name="Ishibashi T."/>
            <person name="Yamashita H."/>
            <person name="Murakawa K."/>
            <person name="Fujimori K."/>
            <person name="Tanai H."/>
            <person name="Kimata M."/>
            <person name="Watanabe M."/>
            <person name="Hiraoka S."/>
            <person name="Chiba Y."/>
            <person name="Ishida S."/>
            <person name="Ono Y."/>
            <person name="Takiguchi S."/>
            <person name="Watanabe S."/>
            <person name="Yosida M."/>
            <person name="Hotuta T."/>
            <person name="Kusano J."/>
            <person name="Kanehori K."/>
            <person name="Takahashi-Fujii A."/>
            <person name="Hara H."/>
            <person name="Tanase T.-O."/>
            <person name="Nomura Y."/>
            <person name="Togiya S."/>
            <person name="Komai F."/>
            <person name="Hara R."/>
            <person name="Takeuchi K."/>
            <person name="Arita M."/>
            <person name="Imose N."/>
            <person name="Musashino K."/>
            <person name="Yuuki H."/>
            <person name="Oshima A."/>
            <person name="Sasaki N."/>
            <person name="Aotsuka S."/>
            <person name="Yoshikawa Y."/>
            <person name="Matsunawa H."/>
            <person name="Ichihara T."/>
            <person name="Shiohata N."/>
            <person name="Sano S."/>
            <person name="Moriya S."/>
            <person name="Momiyama H."/>
            <person name="Satoh N."/>
            <person name="Takami S."/>
            <person name="Terashima Y."/>
            <person name="Suzuki O."/>
            <person name="Nakagawa S."/>
            <person name="Senoh A."/>
            <person name="Mizoguchi H."/>
            <person name="Goto Y."/>
            <person name="Shimizu F."/>
            <person name="Wakebe H."/>
            <person name="Hishigaki H."/>
            <person name="Watanabe T."/>
            <person name="Sugiyama A."/>
            <person name="Takemoto M."/>
            <person name="Kawakami B."/>
            <person name="Yamazaki M."/>
            <person name="Watanabe K."/>
            <person name="Kumagai A."/>
            <person name="Itakura S."/>
            <person name="Fukuzumi Y."/>
            <person name="Fujimori Y."/>
            <person name="Komiyama M."/>
            <person name="Tashiro H."/>
            <person name="Tanigami A."/>
            <person name="Fujiwara T."/>
            <person name="Ono T."/>
            <person name="Yamada K."/>
            <person name="Fujii Y."/>
            <person name="Ozaki K."/>
            <person name="Hirao M."/>
            <person name="Ohmori Y."/>
            <person name="Kawabata A."/>
            <person name="Hikiji T."/>
            <person name="Kobatake N."/>
            <person name="Inagaki H."/>
            <person name="Ikema Y."/>
            <person name="Okamoto S."/>
            <person name="Okitani R."/>
            <person name="Kawakami T."/>
            <person name="Noguchi S."/>
            <person name="Itoh T."/>
            <person name="Shigeta K."/>
            <person name="Senba T."/>
            <person name="Matsumura K."/>
            <person name="Nakajima Y."/>
            <person name="Mizuno T."/>
            <person name="Morinaga M."/>
            <person name="Sasaki M."/>
            <person name="Togashi T."/>
            <person name="Oyama M."/>
            <person name="Hata H."/>
            <person name="Watanabe M."/>
            <person name="Komatsu T."/>
            <person name="Mizushima-Sugano J."/>
            <person name="Satoh T."/>
            <person name="Shirai Y."/>
            <person name="Takahashi Y."/>
            <person name="Nakagawa K."/>
            <person name="Okumura K."/>
            <person name="Nagase T."/>
            <person name="Nomura N."/>
            <person name="Kikuchi H."/>
            <person name="Masuho Y."/>
            <person name="Yamashita R."/>
            <person name="Nakai K."/>
            <person name="Yada T."/>
            <person name="Nakamura Y."/>
            <person name="Ohara O."/>
            <person name="Isogai T."/>
            <person name="Sugano S."/>
        </authorList>
    </citation>
    <scope>NUCLEOTIDE SEQUENCE [LARGE SCALE MRNA] (ISOFORMS 1 AND 3)</scope>
    <source>
        <tissue>Small intestine</tissue>
        <tissue>Trachea</tissue>
    </source>
</reference>
<reference key="3">
    <citation type="journal article" date="2006" name="Nature">
        <title>DNA sequence of human chromosome 17 and analysis of rearrangement in the human lineage.</title>
        <authorList>
            <person name="Zody M.C."/>
            <person name="Garber M."/>
            <person name="Adams D.J."/>
            <person name="Sharpe T."/>
            <person name="Harrow J."/>
            <person name="Lupski J.R."/>
            <person name="Nicholson C."/>
            <person name="Searle S.M."/>
            <person name="Wilming L."/>
            <person name="Young S.K."/>
            <person name="Abouelleil A."/>
            <person name="Allen N.R."/>
            <person name="Bi W."/>
            <person name="Bloom T."/>
            <person name="Borowsky M.L."/>
            <person name="Bugalter B.E."/>
            <person name="Butler J."/>
            <person name="Chang J.L."/>
            <person name="Chen C.-K."/>
            <person name="Cook A."/>
            <person name="Corum B."/>
            <person name="Cuomo C.A."/>
            <person name="de Jong P.J."/>
            <person name="DeCaprio D."/>
            <person name="Dewar K."/>
            <person name="FitzGerald M."/>
            <person name="Gilbert J."/>
            <person name="Gibson R."/>
            <person name="Gnerre S."/>
            <person name="Goldstein S."/>
            <person name="Grafham D.V."/>
            <person name="Grocock R."/>
            <person name="Hafez N."/>
            <person name="Hagopian D.S."/>
            <person name="Hart E."/>
            <person name="Norman C.H."/>
            <person name="Humphray S."/>
            <person name="Jaffe D.B."/>
            <person name="Jones M."/>
            <person name="Kamal M."/>
            <person name="Khodiyar V.K."/>
            <person name="LaButti K."/>
            <person name="Laird G."/>
            <person name="Lehoczky J."/>
            <person name="Liu X."/>
            <person name="Lokyitsang T."/>
            <person name="Loveland J."/>
            <person name="Lui A."/>
            <person name="Macdonald P."/>
            <person name="Major J.E."/>
            <person name="Matthews L."/>
            <person name="Mauceli E."/>
            <person name="McCarroll S.A."/>
            <person name="Mihalev A.H."/>
            <person name="Mudge J."/>
            <person name="Nguyen C."/>
            <person name="Nicol R."/>
            <person name="O'Leary S.B."/>
            <person name="Osoegawa K."/>
            <person name="Schwartz D.C."/>
            <person name="Shaw-Smith C."/>
            <person name="Stankiewicz P."/>
            <person name="Steward C."/>
            <person name="Swarbreck D."/>
            <person name="Venkataraman V."/>
            <person name="Whittaker C.A."/>
            <person name="Yang X."/>
            <person name="Zimmer A.R."/>
            <person name="Bradley A."/>
            <person name="Hubbard T."/>
            <person name="Birren B.W."/>
            <person name="Rogers J."/>
            <person name="Lander E.S."/>
            <person name="Nusbaum C."/>
        </authorList>
    </citation>
    <scope>NUCLEOTIDE SEQUENCE [LARGE SCALE GENOMIC DNA]</scope>
</reference>
<reference key="4">
    <citation type="submission" date="2005-09" db="EMBL/GenBank/DDBJ databases">
        <authorList>
            <person name="Mural R.J."/>
            <person name="Istrail S."/>
            <person name="Sutton G.G."/>
            <person name="Florea L."/>
            <person name="Halpern A.L."/>
            <person name="Mobarry C.M."/>
            <person name="Lippert R."/>
            <person name="Walenz B."/>
            <person name="Shatkay H."/>
            <person name="Dew I."/>
            <person name="Miller J.R."/>
            <person name="Flanigan M.J."/>
            <person name="Edwards N.J."/>
            <person name="Bolanos R."/>
            <person name="Fasulo D."/>
            <person name="Halldorsson B.V."/>
            <person name="Hannenhalli S."/>
            <person name="Turner R."/>
            <person name="Yooseph S."/>
            <person name="Lu F."/>
            <person name="Nusskern D.R."/>
            <person name="Shue B.C."/>
            <person name="Zheng X.H."/>
            <person name="Zhong F."/>
            <person name="Delcher A.L."/>
            <person name="Huson D.H."/>
            <person name="Kravitz S.A."/>
            <person name="Mouchard L."/>
            <person name="Reinert K."/>
            <person name="Remington K.A."/>
            <person name="Clark A.G."/>
            <person name="Waterman M.S."/>
            <person name="Eichler E.E."/>
            <person name="Adams M.D."/>
            <person name="Hunkapiller M.W."/>
            <person name="Myers E.W."/>
            <person name="Venter J.C."/>
        </authorList>
    </citation>
    <scope>NUCLEOTIDE SEQUENCE [LARGE SCALE GENOMIC DNA]</scope>
</reference>
<reference key="5">
    <citation type="journal article" date="2004" name="Genome Res.">
        <title>The status, quality, and expansion of the NIH full-length cDNA project: the Mammalian Gene Collection (MGC).</title>
        <authorList>
            <consortium name="The MGC Project Team"/>
        </authorList>
    </citation>
    <scope>NUCLEOTIDE SEQUENCE [LARGE SCALE MRNA] (ISOFORM 1)</scope>
    <source>
        <tissue>Uterus</tissue>
    </source>
</reference>
<reference key="6">
    <citation type="submission" date="1998-12" db="EMBL/GenBank/DDBJ databases">
        <title>Functional prediction of the coding sequences of 14 new genes deduced by analysis of cDNA clones from human fetal liver.</title>
        <authorList>
            <person name="Zhang C."/>
            <person name="Yu Y."/>
            <person name="Zhang S."/>
            <person name="Ouyang S."/>
            <person name="Luo L."/>
            <person name="Wei H."/>
            <person name="Zhou G."/>
            <person name="Liu M."/>
            <person name="He F."/>
        </authorList>
    </citation>
    <scope>NUCLEOTIDE SEQUENCE [LARGE SCALE MRNA] OF 450-531</scope>
    <source>
        <tissue>Fetal liver</tissue>
    </source>
</reference>
<reference key="7">
    <citation type="journal article" date="2006" name="Nat. Biotechnol.">
        <title>A probability-based approach for high-throughput protein phosphorylation analysis and site localization.</title>
        <authorList>
            <person name="Beausoleil S.A."/>
            <person name="Villen J."/>
            <person name="Gerber S.A."/>
            <person name="Rush J."/>
            <person name="Gygi S.P."/>
        </authorList>
    </citation>
    <scope>PHOSPHORYLATION [LARGE SCALE ANALYSIS] AT THR-217</scope>
    <scope>IDENTIFICATION BY MASS SPECTROMETRY [LARGE SCALE ANALYSIS]</scope>
    <source>
        <tissue>Cervix carcinoma</tissue>
    </source>
</reference>
<reference key="8">
    <citation type="journal article" date="2008" name="Proc. Natl. Acad. Sci. U.S.A.">
        <title>A quantitative atlas of mitotic phosphorylation.</title>
        <authorList>
            <person name="Dephoure N."/>
            <person name="Zhou C."/>
            <person name="Villen J."/>
            <person name="Beausoleil S.A."/>
            <person name="Bakalarski C.E."/>
            <person name="Elledge S.J."/>
            <person name="Gygi S.P."/>
        </authorList>
    </citation>
    <scope>PHOSPHORYLATION [LARGE SCALE ANALYSIS] AT THR-217</scope>
    <scope>IDENTIFICATION BY MASS SPECTROMETRY [LARGE SCALE ANALYSIS]</scope>
    <source>
        <tissue>Cervix carcinoma</tissue>
    </source>
</reference>
<reference key="9">
    <citation type="journal article" date="2009" name="Anal. Chem.">
        <title>Lys-N and trypsin cover complementary parts of the phosphoproteome in a refined SCX-based approach.</title>
        <authorList>
            <person name="Gauci S."/>
            <person name="Helbig A.O."/>
            <person name="Slijper M."/>
            <person name="Krijgsveld J."/>
            <person name="Heck A.J."/>
            <person name="Mohammed S."/>
        </authorList>
    </citation>
    <scope>IDENTIFICATION BY MASS SPECTROMETRY [LARGE SCALE ANALYSIS]</scope>
</reference>
<reference key="10">
    <citation type="journal article" date="2009" name="Sci. Signal.">
        <title>Quantitative phosphoproteomic analysis of T cell receptor signaling reveals system-wide modulation of protein-protein interactions.</title>
        <authorList>
            <person name="Mayya V."/>
            <person name="Lundgren D.H."/>
            <person name="Hwang S.-I."/>
            <person name="Rezaul K."/>
            <person name="Wu L."/>
            <person name="Eng J.K."/>
            <person name="Rodionov V."/>
            <person name="Han D.K."/>
        </authorList>
    </citation>
    <scope>IDENTIFICATION BY MASS SPECTROMETRY [LARGE SCALE ANALYSIS]</scope>
    <source>
        <tissue>Leukemic T-cell</tissue>
    </source>
</reference>
<reference key="11">
    <citation type="journal article" date="2009" name="Science">
        <title>Lysine acetylation targets protein complexes and co-regulates major cellular functions.</title>
        <authorList>
            <person name="Choudhary C."/>
            <person name="Kumar C."/>
            <person name="Gnad F."/>
            <person name="Nielsen M.L."/>
            <person name="Rehman M."/>
            <person name="Walther T.C."/>
            <person name="Olsen J.V."/>
            <person name="Mann M."/>
        </authorList>
    </citation>
    <scope>IDENTIFICATION BY MASS SPECTROMETRY [LARGE SCALE ANALYSIS]</scope>
</reference>
<reference key="12">
    <citation type="journal article" date="2010" name="FEBS J.">
        <title>The SWI/SNF protein BAF60b is ubiquitinated through a signalling process involving Rac GTPase and the RING finger protein Unkempt.</title>
        <authorList>
            <person name="Lores P."/>
            <person name="Visvikis O."/>
            <person name="Luna R."/>
            <person name="Lemichez E."/>
            <person name="Gacon G."/>
        </authorList>
    </citation>
    <scope>INTERACTION WITH UNKL</scope>
    <scope>UBIQUITINATION</scope>
</reference>
<reference key="13">
    <citation type="journal article" date="2008" name="Genes Dev.">
        <title>Regulation of muscle development by DPF3, a novel histone acetylation and methylation reader of the BAF chromatin remodeling complex.</title>
        <authorList>
            <person name="Lange M."/>
            <person name="Kaynak B."/>
            <person name="Forster U.B."/>
            <person name="Toenjes M."/>
            <person name="Fischer J.J."/>
            <person name="Grimm C."/>
            <person name="Schlesinger J."/>
            <person name="Just S."/>
            <person name="Dunkel I."/>
            <person name="Krueger T."/>
            <person name="Mebus S."/>
            <person name="Lehrach H."/>
            <person name="Lurz R."/>
            <person name="Gobom J."/>
            <person name="Rottbauer W."/>
            <person name="Abdelilah-Seyfried S."/>
            <person name="Sperling S."/>
        </authorList>
    </citation>
    <scope>IDENTIFICATION IN THE BAF COMPLEX</scope>
    <scope>IDENTIFICATION BY MASS SPECTROMETRY</scope>
</reference>
<reference key="14">
    <citation type="journal article" date="2010" name="Sci. Signal.">
        <title>Quantitative phosphoproteomics reveals widespread full phosphorylation site occupancy during mitosis.</title>
        <authorList>
            <person name="Olsen J.V."/>
            <person name="Vermeulen M."/>
            <person name="Santamaria A."/>
            <person name="Kumar C."/>
            <person name="Miller M.L."/>
            <person name="Jensen L.J."/>
            <person name="Gnad F."/>
            <person name="Cox J."/>
            <person name="Jensen T.S."/>
            <person name="Nigg E.A."/>
            <person name="Brunak S."/>
            <person name="Mann M."/>
        </authorList>
    </citation>
    <scope>PHOSPHORYLATION [LARGE SCALE ANALYSIS] AT THR-217</scope>
    <scope>IDENTIFICATION BY MASS SPECTROMETRY [LARGE SCALE ANALYSIS]</scope>
    <source>
        <tissue>Cervix carcinoma</tissue>
    </source>
</reference>
<reference key="15">
    <citation type="journal article" date="2011" name="BMC Syst. Biol.">
        <title>Initial characterization of the human central proteome.</title>
        <authorList>
            <person name="Burkard T.R."/>
            <person name="Planyavsky M."/>
            <person name="Kaupe I."/>
            <person name="Breitwieser F.P."/>
            <person name="Buerckstuemmer T."/>
            <person name="Bennett K.L."/>
            <person name="Superti-Furga G."/>
            <person name="Colinge J."/>
        </authorList>
    </citation>
    <scope>IDENTIFICATION BY MASS SPECTROMETRY [LARGE SCALE ANALYSIS]</scope>
</reference>
<reference key="16">
    <citation type="journal article" date="2011" name="Sci. Signal.">
        <title>System-wide temporal characterization of the proteome and phosphoproteome of human embryonic stem cell differentiation.</title>
        <authorList>
            <person name="Rigbolt K.T."/>
            <person name="Prokhorova T.A."/>
            <person name="Akimov V."/>
            <person name="Henningsen J."/>
            <person name="Johansen P.T."/>
            <person name="Kratchmarova I."/>
            <person name="Kassem M."/>
            <person name="Mann M."/>
            <person name="Olsen J.V."/>
            <person name="Blagoev B."/>
        </authorList>
    </citation>
    <scope>PHOSPHORYLATION [LARGE SCALE ANALYSIS] AT THR-217</scope>
    <scope>IDENTIFICATION BY MASS SPECTROMETRY [LARGE SCALE ANALYSIS]</scope>
</reference>
<reference key="17">
    <citation type="journal article" date="2013" name="J. Proteome Res.">
        <title>Toward a comprehensive characterization of a human cancer cell phosphoproteome.</title>
        <authorList>
            <person name="Zhou H."/>
            <person name="Di Palma S."/>
            <person name="Preisinger C."/>
            <person name="Peng M."/>
            <person name="Polat A.N."/>
            <person name="Heck A.J."/>
            <person name="Mohammed S."/>
        </authorList>
    </citation>
    <scope>PHOSPHORYLATION [LARGE SCALE ANALYSIS] AT SER-203 AND THR-217</scope>
    <scope>IDENTIFICATION BY MASS SPECTROMETRY [LARGE SCALE ANALYSIS]</scope>
    <source>
        <tissue>Cervix carcinoma</tissue>
        <tissue>Erythroleukemia</tissue>
    </source>
</reference>
<reference key="18">
    <citation type="journal article" date="2014" name="J. Proteomics">
        <title>An enzyme assisted RP-RPLC approach for in-depth analysis of human liver phosphoproteome.</title>
        <authorList>
            <person name="Bian Y."/>
            <person name="Song C."/>
            <person name="Cheng K."/>
            <person name="Dong M."/>
            <person name="Wang F."/>
            <person name="Huang J."/>
            <person name="Sun D."/>
            <person name="Wang L."/>
            <person name="Ye M."/>
            <person name="Zou H."/>
        </authorList>
    </citation>
    <scope>PHOSPHORYLATION [LARGE SCALE ANALYSIS] AT THR-217</scope>
    <scope>IDENTIFICATION BY MASS SPECTROMETRY [LARGE SCALE ANALYSIS]</scope>
    <source>
        <tissue>Liver</tissue>
    </source>
</reference>
<reference key="19">
    <citation type="journal article" date="2014" name="Mol. Cell. Proteomics">
        <title>Immunoaffinity enrichment and mass spectrometry analysis of protein methylation.</title>
        <authorList>
            <person name="Guo A."/>
            <person name="Gu H."/>
            <person name="Zhou J."/>
            <person name="Mulhern D."/>
            <person name="Wang Y."/>
            <person name="Lee K.A."/>
            <person name="Yang V."/>
            <person name="Aguiar M."/>
            <person name="Kornhauser J."/>
            <person name="Jia X."/>
            <person name="Ren J."/>
            <person name="Beausoleil S.A."/>
            <person name="Silva J.C."/>
            <person name="Vemulapalli V."/>
            <person name="Bedford M.T."/>
            <person name="Comb M.J."/>
        </authorList>
    </citation>
    <scope>METHYLATION [LARGE SCALE ANALYSIS] AT ARG-81 AND ARG-104</scope>
    <scope>IDENTIFICATION BY MASS SPECTROMETRY [LARGE SCALE ANALYSIS]</scope>
    <source>
        <tissue>Colon carcinoma</tissue>
    </source>
</reference>
<reference key="20">
    <citation type="journal article" date="2017" name="Nat. Struct. Mol. Biol.">
        <title>Site-specific mapping of the human SUMO proteome reveals co-modification with phosphorylation.</title>
        <authorList>
            <person name="Hendriks I.A."/>
            <person name="Lyon D."/>
            <person name="Young C."/>
            <person name="Jensen L.J."/>
            <person name="Vertegaal A.C."/>
            <person name="Nielsen M.L."/>
        </authorList>
    </citation>
    <scope>SUMOYLATION [LARGE SCALE ANALYSIS] AT LYS-226</scope>
    <scope>IDENTIFICATION BY MASS SPECTROMETRY [LARGE SCALE ANALYSIS]</scope>
</reference>
<reference key="21">
    <citation type="journal article" date="2012" name="J. Biol. Chem.">
        <title>SWI/SNF chromatin-remodeling factors: multiscale analyses and diverse functions.</title>
        <authorList>
            <person name="Euskirchen G."/>
            <person name="Auerbach R.K."/>
            <person name="Snyder M."/>
        </authorList>
    </citation>
    <scope>REVIEW ON SWI/SNF CHROMATIN REMODELING COMPLEXES</scope>
</reference>
<reference key="22">
    <citation type="journal article" date="2015" name="Sci. Adv.">
        <title>Mammalian SWI/SNF chromatin remodeling complexes and cancer: Mechanistic insights gained from human genomics.</title>
        <authorList>
            <person name="Kadoch C."/>
            <person name="Crabtree G.R."/>
        </authorList>
    </citation>
    <scope>REVIEW ON SWI/SNF CHROMATIN REMODELING COMPLEXES</scope>
</reference>
<reference key="23">
    <citation type="journal article" date="2017" name="Nat. Genet.">
        <title>Chromatin-remodeling factor SMARCD2 regulates transcriptional networks controlling differentiation of neutrophil granulocytes.</title>
        <authorList>
            <person name="Witzel M."/>
            <person name="Petersheim D."/>
            <person name="Fan Y."/>
            <person name="Bahrami E."/>
            <person name="Racek T."/>
            <person name="Rohlfs M."/>
            <person name="Puchalka J."/>
            <person name="Mertes C."/>
            <person name="Gagneur J."/>
            <person name="Ziegenhain C."/>
            <person name="Enard W."/>
            <person name="Stray-Pedersen A."/>
            <person name="Arkwright P.D."/>
            <person name="Abboud M.R."/>
            <person name="Pazhakh V."/>
            <person name="Lieschke G.J."/>
            <person name="Krawitz P.M."/>
            <person name="Dahlhoff M."/>
            <person name="Schneider M.R."/>
            <person name="Wolf E."/>
            <person name="Horny H.P."/>
            <person name="Schmidt H."/>
            <person name="Schaeffer A.A."/>
            <person name="Klein C."/>
        </authorList>
    </citation>
    <scope>FUNCTION</scope>
    <scope>INVOLVEMENT IN SGD2</scope>
    <scope>INTERACTION WITH CEBPE</scope>
</reference>
<evidence type="ECO:0000255" key="1">
    <source>
        <dbReference type="PROSITE-ProRule" id="PRU01273"/>
    </source>
</evidence>
<evidence type="ECO:0000256" key="2">
    <source>
        <dbReference type="SAM" id="MobiDB-lite"/>
    </source>
</evidence>
<evidence type="ECO:0000269" key="3">
    <source>
    </source>
</evidence>
<evidence type="ECO:0000269" key="4">
    <source>
    </source>
</evidence>
<evidence type="ECO:0000269" key="5">
    <source>
    </source>
</evidence>
<evidence type="ECO:0000269" key="6">
    <source>
    </source>
</evidence>
<evidence type="ECO:0000303" key="7">
    <source>
    </source>
</evidence>
<evidence type="ECO:0000303" key="8">
    <source>
    </source>
</evidence>
<evidence type="ECO:0000303" key="9">
    <source>
    </source>
</evidence>
<evidence type="ECO:0000303" key="10">
    <source>
    </source>
</evidence>
<evidence type="ECO:0000305" key="11"/>
<evidence type="ECO:0007744" key="12">
    <source>
    </source>
</evidence>
<evidence type="ECO:0007744" key="13">
    <source>
    </source>
</evidence>
<evidence type="ECO:0007744" key="14">
    <source>
    </source>
</evidence>
<evidence type="ECO:0007744" key="15">
    <source>
    </source>
</evidence>
<evidence type="ECO:0007744" key="16">
    <source>
    </source>
</evidence>
<evidence type="ECO:0007744" key="17">
    <source>
    </source>
</evidence>
<evidence type="ECO:0007744" key="18">
    <source>
    </source>
</evidence>
<evidence type="ECO:0007744" key="19">
    <source>
    </source>
</evidence>
<organism>
    <name type="scientific">Homo sapiens</name>
    <name type="common">Human</name>
    <dbReference type="NCBI Taxonomy" id="9606"/>
    <lineage>
        <taxon>Eukaryota</taxon>
        <taxon>Metazoa</taxon>
        <taxon>Chordata</taxon>
        <taxon>Craniata</taxon>
        <taxon>Vertebrata</taxon>
        <taxon>Euteleostomi</taxon>
        <taxon>Mammalia</taxon>
        <taxon>Eutheria</taxon>
        <taxon>Euarchontoglires</taxon>
        <taxon>Primates</taxon>
        <taxon>Haplorrhini</taxon>
        <taxon>Catarrhini</taxon>
        <taxon>Hominidae</taxon>
        <taxon>Homo</taxon>
    </lineage>
</organism>
<keyword id="KW-0025">Alternative splicing</keyword>
<keyword id="KW-0156">Chromatin regulator</keyword>
<keyword id="KW-1017">Isopeptide bond</keyword>
<keyword id="KW-0488">Methylation</keyword>
<keyword id="KW-0539">Nucleus</keyword>
<keyword id="KW-0597">Phosphoprotein</keyword>
<keyword id="KW-1267">Proteomics identification</keyword>
<keyword id="KW-1185">Reference proteome</keyword>
<keyword id="KW-0804">Transcription</keyword>
<keyword id="KW-0805">Transcription regulation</keyword>
<keyword id="KW-0832">Ubl conjugation</keyword>
<protein>
    <recommendedName>
        <fullName>SWI/SNF-related matrix-associated actin-dependent regulator of chromatin subfamily D member 2</fullName>
    </recommendedName>
    <alternativeName>
        <fullName>60 kDa BRG-1/Brm-associated factor subunit B</fullName>
    </alternativeName>
    <alternativeName>
        <fullName>BRG1-associated factor 60B</fullName>
        <shortName>BAF60B</shortName>
    </alternativeName>
</protein>
<proteinExistence type="evidence at protein level"/>